<organism>
    <name type="scientific">Rhizopus delemar (strain RA 99-880 / ATCC MYA-4621 / FGSC 9543 / NRRL 43880)</name>
    <name type="common">Mucormycosis agent</name>
    <name type="synonym">Rhizopus arrhizus var. delemar</name>
    <dbReference type="NCBI Taxonomy" id="246409"/>
    <lineage>
        <taxon>Eukaryota</taxon>
        <taxon>Fungi</taxon>
        <taxon>Fungi incertae sedis</taxon>
        <taxon>Mucoromycota</taxon>
        <taxon>Mucoromycotina</taxon>
        <taxon>Mucoromycetes</taxon>
        <taxon>Mucorales</taxon>
        <taxon>Mucorineae</taxon>
        <taxon>Rhizopodaceae</taxon>
        <taxon>Rhizopus</taxon>
    </lineage>
</organism>
<proteinExistence type="inferred from homology"/>
<reference key="1">
    <citation type="journal article" date="2009" name="PLoS Genet.">
        <title>Genomic analysis of the basal lineage fungus Rhizopus oryzae reveals a whole-genome duplication.</title>
        <authorList>
            <person name="Ma L.-J."/>
            <person name="Ibrahim A.S."/>
            <person name="Skory C."/>
            <person name="Grabherr M.G."/>
            <person name="Burger G."/>
            <person name="Butler M."/>
            <person name="Elias M."/>
            <person name="Idnurm A."/>
            <person name="Lang B.F."/>
            <person name="Sone T."/>
            <person name="Abe A."/>
            <person name="Calvo S.E."/>
            <person name="Corrochano L.M."/>
            <person name="Engels R."/>
            <person name="Fu J."/>
            <person name="Hansberg W."/>
            <person name="Kim J.-M."/>
            <person name="Kodira C.D."/>
            <person name="Koehrsen M.J."/>
            <person name="Liu B."/>
            <person name="Miranda-Saavedra D."/>
            <person name="O'Leary S."/>
            <person name="Ortiz-Castellanos L."/>
            <person name="Poulter R."/>
            <person name="Rodriguez-Romero J."/>
            <person name="Ruiz-Herrera J."/>
            <person name="Shen Y.-Q."/>
            <person name="Zeng Q."/>
            <person name="Galagan J."/>
            <person name="Birren B.W."/>
            <person name="Cuomo C.A."/>
            <person name="Wickes B.L."/>
        </authorList>
    </citation>
    <scope>NUCLEOTIDE SEQUENCE [LARGE SCALE GENOMIC DNA]</scope>
    <source>
        <strain>RA 99-880 / ATCC MYA-4621 / FGSC 9543 / NRRL 43880</strain>
    </source>
</reference>
<comment type="function">
    <text evidence="1">PPIases accelerate the folding of proteins. It catalyzes the cis-trans isomerization of proline imidic peptide bonds in oligopeptides (By similarity).</text>
</comment>
<comment type="catalytic activity">
    <reaction>
        <text>[protein]-peptidylproline (omega=180) = [protein]-peptidylproline (omega=0)</text>
        <dbReference type="Rhea" id="RHEA:16237"/>
        <dbReference type="Rhea" id="RHEA-COMP:10747"/>
        <dbReference type="Rhea" id="RHEA-COMP:10748"/>
        <dbReference type="ChEBI" id="CHEBI:83833"/>
        <dbReference type="ChEBI" id="CHEBI:83834"/>
        <dbReference type="EC" id="5.2.1.8"/>
    </reaction>
</comment>
<comment type="activity regulation">
    <text evidence="1">Inhibited by cyclosporin A (CsA).</text>
</comment>
<comment type="subcellular location">
    <subcellularLocation>
        <location evidence="1">Endoplasmic reticulum lumen</location>
    </subcellularLocation>
</comment>
<comment type="similarity">
    <text evidence="4">Belongs to the cyclophilin-type PPIase family. PPIase B subfamily.</text>
</comment>
<keyword id="KW-0256">Endoplasmic reticulum</keyword>
<keyword id="KW-0325">Glycoprotein</keyword>
<keyword id="KW-0413">Isomerase</keyword>
<keyword id="KW-1185">Reference proteome</keyword>
<keyword id="KW-0697">Rotamase</keyword>
<keyword id="KW-0732">Signal</keyword>
<dbReference type="EC" id="5.2.1.8"/>
<dbReference type="EMBL" id="CH476741">
    <property type="protein sequence ID" value="EIE87329.1"/>
    <property type="molecule type" value="Genomic_DNA"/>
</dbReference>
<dbReference type="SMR" id="P0C1I0"/>
<dbReference type="FunCoup" id="P0C1I0">
    <property type="interactions" value="251"/>
</dbReference>
<dbReference type="STRING" id="246409.P0C1I0"/>
<dbReference type="GlyCosmos" id="P0C1I0">
    <property type="glycosylation" value="1 site, No reported glycans"/>
</dbReference>
<dbReference type="VEuPathDB" id="FungiDB:RO3G_12040"/>
<dbReference type="eggNOG" id="KOG0880">
    <property type="taxonomic scope" value="Eukaryota"/>
</dbReference>
<dbReference type="InParanoid" id="P0C1I0"/>
<dbReference type="OMA" id="ENHEITH"/>
<dbReference type="OrthoDB" id="36478at4827"/>
<dbReference type="Proteomes" id="UP000009138">
    <property type="component" value="Unassembled WGS sequence"/>
</dbReference>
<dbReference type="GO" id="GO:0005788">
    <property type="term" value="C:endoplasmic reticulum lumen"/>
    <property type="evidence" value="ECO:0007669"/>
    <property type="project" value="UniProtKB-SubCell"/>
</dbReference>
<dbReference type="GO" id="GO:0000324">
    <property type="term" value="C:fungal-type vacuole"/>
    <property type="evidence" value="ECO:0007669"/>
    <property type="project" value="TreeGrafter"/>
</dbReference>
<dbReference type="GO" id="GO:0016018">
    <property type="term" value="F:cyclosporin A binding"/>
    <property type="evidence" value="ECO:0007669"/>
    <property type="project" value="TreeGrafter"/>
</dbReference>
<dbReference type="GO" id="GO:0003755">
    <property type="term" value="F:peptidyl-prolyl cis-trans isomerase activity"/>
    <property type="evidence" value="ECO:0007669"/>
    <property type="project" value="UniProtKB-KW"/>
</dbReference>
<dbReference type="GO" id="GO:0006457">
    <property type="term" value="P:protein folding"/>
    <property type="evidence" value="ECO:0007669"/>
    <property type="project" value="InterPro"/>
</dbReference>
<dbReference type="CDD" id="cd01926">
    <property type="entry name" value="cyclophilin_ABH_like"/>
    <property type="match status" value="1"/>
</dbReference>
<dbReference type="FunFam" id="2.40.100.10:FF:000001">
    <property type="entry name" value="Peptidyl-prolyl cis-trans isomerase"/>
    <property type="match status" value="1"/>
</dbReference>
<dbReference type="Gene3D" id="2.40.100.10">
    <property type="entry name" value="Cyclophilin-like"/>
    <property type="match status" value="1"/>
</dbReference>
<dbReference type="InterPro" id="IPR029000">
    <property type="entry name" value="Cyclophilin-like_dom_sf"/>
</dbReference>
<dbReference type="InterPro" id="IPR020892">
    <property type="entry name" value="Cyclophilin-type_PPIase_CS"/>
</dbReference>
<dbReference type="InterPro" id="IPR002130">
    <property type="entry name" value="Cyclophilin-type_PPIase_dom"/>
</dbReference>
<dbReference type="PANTHER" id="PTHR11071">
    <property type="entry name" value="PEPTIDYL-PROLYL CIS-TRANS ISOMERASE"/>
    <property type="match status" value="1"/>
</dbReference>
<dbReference type="PANTHER" id="PTHR11071:SF561">
    <property type="entry name" value="PEPTIDYL-PROLYL CIS-TRANS ISOMERASE D-RELATED"/>
    <property type="match status" value="1"/>
</dbReference>
<dbReference type="Pfam" id="PF00160">
    <property type="entry name" value="Pro_isomerase"/>
    <property type="match status" value="1"/>
</dbReference>
<dbReference type="PRINTS" id="PR00153">
    <property type="entry name" value="CSAPPISMRASE"/>
</dbReference>
<dbReference type="SUPFAM" id="SSF50891">
    <property type="entry name" value="Cyclophilin-like"/>
    <property type="match status" value="1"/>
</dbReference>
<dbReference type="PROSITE" id="PS00170">
    <property type="entry name" value="CSA_PPIASE_1"/>
    <property type="match status" value="1"/>
</dbReference>
<dbReference type="PROSITE" id="PS50072">
    <property type="entry name" value="CSA_PPIASE_2"/>
    <property type="match status" value="1"/>
</dbReference>
<protein>
    <recommendedName>
        <fullName>Peptidyl-prolyl cis-trans isomerase B2</fullName>
        <shortName>PPIase B2</shortName>
        <ecNumber>5.2.1.8</ecNumber>
    </recommendedName>
    <alternativeName>
        <fullName>Cyclophilin B2</fullName>
    </alternativeName>
    <alternativeName>
        <fullName>Rotamase B2</fullName>
    </alternativeName>
</protein>
<sequence length="209" mass="22931">MSRFNIATLFITLLVTLCTFRFVSAESKGPVITDKIYFDIKQGEESLGRIVFGLYGKTVPKTAENFKQLATGQNGYGYKGSTFHRVIDQFMIQGGDFTNHDGTGGKSIYGSRFPDENFKLRHTVPGLLSMANAGPDSNGSQFFITTVVTSWLDGKHVVFGKVLEGMDVVTKIEKTPTNYRSKPNVDVVIADCGLLSDDASEEAVKHAEL</sequence>
<gene>
    <name type="primary">cyp9</name>
    <name type="ORF">RO3G_12040</name>
</gene>
<feature type="signal peptide" evidence="2">
    <location>
        <begin position="1"/>
        <end position="25"/>
    </location>
</feature>
<feature type="chain" id="PRO_0000244713" description="Peptidyl-prolyl cis-trans isomerase B2">
    <location>
        <begin position="26"/>
        <end position="209"/>
    </location>
</feature>
<feature type="domain" description="PPIase cyclophilin-type" evidence="3">
    <location>
        <begin position="37"/>
        <end position="194"/>
    </location>
</feature>
<feature type="short sequence motif" description="Prevents secretion from ER">
    <location>
        <begin position="206"/>
        <end position="209"/>
    </location>
</feature>
<feature type="glycosylation site" description="N-linked (GlcNAc...) asparagine" evidence="2">
    <location>
        <position position="138"/>
    </location>
</feature>
<evidence type="ECO:0000250" key="1"/>
<evidence type="ECO:0000255" key="2"/>
<evidence type="ECO:0000255" key="3">
    <source>
        <dbReference type="PROSITE-ProRule" id="PRU00156"/>
    </source>
</evidence>
<evidence type="ECO:0000305" key="4"/>
<accession>P0C1I0</accession>
<accession>I1CFU9</accession>
<name>PPIB2_RHIO9</name>